<keyword id="KW-1003">Cell membrane</keyword>
<keyword id="KW-1015">Disulfide bond</keyword>
<keyword id="KW-0297">G-protein coupled receptor</keyword>
<keyword id="KW-0325">Glycoprotein</keyword>
<keyword id="KW-0472">Membrane</keyword>
<keyword id="KW-0675">Receptor</keyword>
<keyword id="KW-1185">Reference proteome</keyword>
<keyword id="KW-0807">Transducer</keyword>
<keyword id="KW-0812">Transmembrane</keyword>
<keyword id="KW-1133">Transmembrane helix</keyword>
<feature type="chain" id="PRO_0000068940" description="5-hydroxytryptamine receptor 1F">
    <location>
        <begin position="1"/>
        <end position="366"/>
    </location>
</feature>
<feature type="topological domain" description="Extracellular" evidence="2">
    <location>
        <begin position="1"/>
        <end position="24"/>
    </location>
</feature>
<feature type="transmembrane region" description="Helical; Name=1" evidence="2">
    <location>
        <begin position="25"/>
        <end position="49"/>
    </location>
</feature>
<feature type="topological domain" description="Cytoplasmic" evidence="2">
    <location>
        <begin position="50"/>
        <end position="59"/>
    </location>
</feature>
<feature type="transmembrane region" description="Helical; Name=2" evidence="2">
    <location>
        <begin position="60"/>
        <end position="81"/>
    </location>
</feature>
<feature type="topological domain" description="Extracellular" evidence="2">
    <location>
        <begin position="82"/>
        <end position="96"/>
    </location>
</feature>
<feature type="transmembrane region" description="Helical; Name=3" evidence="2">
    <location>
        <begin position="97"/>
        <end position="119"/>
    </location>
</feature>
<feature type="topological domain" description="Cytoplasmic" evidence="2">
    <location>
        <begin position="120"/>
        <end position="139"/>
    </location>
</feature>
<feature type="transmembrane region" description="Helical; Name=4" evidence="2">
    <location>
        <begin position="140"/>
        <end position="159"/>
    </location>
</feature>
<feature type="topological domain" description="Extracellular" evidence="2">
    <location>
        <begin position="160"/>
        <end position="178"/>
    </location>
</feature>
<feature type="transmembrane region" description="Helical; Name=5" evidence="2">
    <location>
        <begin position="179"/>
        <end position="202"/>
    </location>
</feature>
<feature type="topological domain" description="Cytoplasmic" evidence="2">
    <location>
        <begin position="203"/>
        <end position="291"/>
    </location>
</feature>
<feature type="transmembrane region" description="Helical; Name=6" evidence="2">
    <location>
        <begin position="292"/>
        <end position="315"/>
    </location>
</feature>
<feature type="topological domain" description="Extracellular" evidence="2">
    <location>
        <begin position="316"/>
        <end position="327"/>
    </location>
</feature>
<feature type="transmembrane region" description="Helical; Name=7" evidence="2">
    <location>
        <begin position="328"/>
        <end position="350"/>
    </location>
</feature>
<feature type="topological domain" description="Cytoplasmic" evidence="2">
    <location>
        <begin position="351"/>
        <end position="366"/>
    </location>
</feature>
<feature type="short sequence motif" description="DRY motif; important for ligand-induced conformation changes" evidence="3">
    <location>
        <begin position="120"/>
        <end position="122"/>
    </location>
</feature>
<feature type="short sequence motif" description="NPxxY motif; important for ligand-induced conformation changes and signaling" evidence="3">
    <location>
        <begin position="343"/>
        <end position="347"/>
    </location>
</feature>
<feature type="binding site" evidence="1">
    <location>
        <position position="103"/>
    </location>
    <ligand>
        <name>serotonin</name>
        <dbReference type="ChEBI" id="CHEBI:350546"/>
    </ligand>
</feature>
<feature type="binding site" evidence="1">
    <location>
        <position position="107"/>
    </location>
    <ligand>
        <name>serotonin</name>
        <dbReference type="ChEBI" id="CHEBI:350546"/>
    </ligand>
</feature>
<feature type="glycosylation site" description="N-linked (GlcNAc...) asparagine" evidence="4">
    <location>
        <position position="5"/>
    </location>
</feature>
<feature type="glycosylation site" description="N-linked (GlcNAc...) asparagine" evidence="4">
    <location>
        <position position="10"/>
    </location>
</feature>
<feature type="disulfide bond" evidence="5">
    <location>
        <begin position="96"/>
        <end position="172"/>
    </location>
</feature>
<protein>
    <recommendedName>
        <fullName>5-hydroxytryptamine receptor 1F</fullName>
        <shortName>5-HT-1F</shortName>
        <shortName>5-HT1F</shortName>
    </recommendedName>
    <alternativeName>
        <fullName>Serotonin receptor 1F</fullName>
    </alternativeName>
</protein>
<name>5HT1F_RAT</name>
<sequence length="366" mass="41880">MDFLNSSDQNLTSEELLNRMPSKILVSLTLSGLALMTTTINCLVITAIIVTRKLHHPANYLICSLAVTDFLVAVLVMPFSIVYIVRESWIMGQGLCDLWLSVDIICCTCSILHLSAIALDRYRAITDAVEYARKRTPRHAGITITTVWVISVFISVPPLFWRHQGNSRDDQCIIKHDHIVSTIYSTFGAFYIPLVLILILYYKIYRAARTLYHKRQASRMIKEELNGQVLLESGEKSIKLVSTSYMLEKSLSDPSTDFDRIHSTVKSPRSELKHEKSWRRQKISGTRERKAATTLGLILGAFVICWLPFFVKELVVNICEKCKISEEMSNFLAWLGYLNSLINPLIYTIFNEDFKKAFQKLVRCRN</sequence>
<dbReference type="EMBL" id="L05596">
    <property type="protein sequence ID" value="AAA42133.1"/>
    <property type="molecule type" value="Genomic_DNA"/>
</dbReference>
<dbReference type="PIR" id="A47385">
    <property type="entry name" value="A47385"/>
</dbReference>
<dbReference type="SMR" id="P30940"/>
<dbReference type="FunCoup" id="P30940">
    <property type="interactions" value="137"/>
</dbReference>
<dbReference type="STRING" id="10116.ENSRNOP00000000907"/>
<dbReference type="BindingDB" id="P30940"/>
<dbReference type="ChEMBL" id="CHEMBL4646"/>
<dbReference type="DrugCentral" id="P30940"/>
<dbReference type="GuidetoPHARMACOLOGY" id="5"/>
<dbReference type="GlyCosmos" id="P30940">
    <property type="glycosylation" value="2 sites, No reported glycans"/>
</dbReference>
<dbReference type="GlyGen" id="P30940">
    <property type="glycosylation" value="2 sites"/>
</dbReference>
<dbReference type="PhosphoSitePlus" id="P30940"/>
<dbReference type="PaxDb" id="10116-ENSRNOP00000000907"/>
<dbReference type="UCSC" id="RGD:71083">
    <property type="organism name" value="rat"/>
</dbReference>
<dbReference type="AGR" id="RGD:71083"/>
<dbReference type="RGD" id="71083">
    <property type="gene designation" value="Htr1f"/>
</dbReference>
<dbReference type="eggNOG" id="KOG3656">
    <property type="taxonomic scope" value="Eukaryota"/>
</dbReference>
<dbReference type="InParanoid" id="P30940"/>
<dbReference type="PhylomeDB" id="P30940"/>
<dbReference type="Reactome" id="R-RNO-390666">
    <property type="pathway name" value="Serotonin receptors"/>
</dbReference>
<dbReference type="Reactome" id="R-RNO-418594">
    <property type="pathway name" value="G alpha (i) signalling events"/>
</dbReference>
<dbReference type="PRO" id="PR:P30940"/>
<dbReference type="Proteomes" id="UP000002494">
    <property type="component" value="Unplaced"/>
</dbReference>
<dbReference type="GO" id="GO:0030425">
    <property type="term" value="C:dendrite"/>
    <property type="evidence" value="ECO:0000318"/>
    <property type="project" value="GO_Central"/>
</dbReference>
<dbReference type="GO" id="GO:0005886">
    <property type="term" value="C:plasma membrane"/>
    <property type="evidence" value="ECO:0000250"/>
    <property type="project" value="UniProtKB"/>
</dbReference>
<dbReference type="GO" id="GO:0045202">
    <property type="term" value="C:synapse"/>
    <property type="evidence" value="ECO:0007669"/>
    <property type="project" value="GOC"/>
</dbReference>
<dbReference type="GO" id="GO:0004993">
    <property type="term" value="F:G protein-coupled serotonin receptor activity"/>
    <property type="evidence" value="ECO:0000250"/>
    <property type="project" value="UniProtKB"/>
</dbReference>
<dbReference type="GO" id="GO:0001586">
    <property type="term" value="F:Gi/o-coupled serotonin receptor activity"/>
    <property type="evidence" value="ECO:0000266"/>
    <property type="project" value="RGD"/>
</dbReference>
<dbReference type="GO" id="GO:0030594">
    <property type="term" value="F:neurotransmitter receptor activity"/>
    <property type="evidence" value="ECO:0000318"/>
    <property type="project" value="GO_Central"/>
</dbReference>
<dbReference type="GO" id="GO:0051378">
    <property type="term" value="F:serotonin binding"/>
    <property type="evidence" value="ECO:0000266"/>
    <property type="project" value="RGD"/>
</dbReference>
<dbReference type="GO" id="GO:0099589">
    <property type="term" value="F:serotonin receptor activity"/>
    <property type="evidence" value="ECO:0000266"/>
    <property type="project" value="RGD"/>
</dbReference>
<dbReference type="GO" id="GO:0007193">
    <property type="term" value="P:adenylate cyclase-inhibiting G protein-coupled receptor signaling pathway"/>
    <property type="evidence" value="ECO:0000250"/>
    <property type="project" value="UniProtKB"/>
</dbReference>
<dbReference type="GO" id="GO:0007198">
    <property type="term" value="P:adenylate cyclase-inhibiting serotonin receptor signaling pathway"/>
    <property type="evidence" value="ECO:0000266"/>
    <property type="project" value="RGD"/>
</dbReference>
<dbReference type="GO" id="GO:0007268">
    <property type="term" value="P:chemical synaptic transmission"/>
    <property type="evidence" value="ECO:0000318"/>
    <property type="project" value="GO_Central"/>
</dbReference>
<dbReference type="GO" id="GO:0007187">
    <property type="term" value="P:G protein-coupled receptor signaling pathway, coupled to cyclic nucleotide second messenger"/>
    <property type="evidence" value="ECO:0000318"/>
    <property type="project" value="GO_Central"/>
</dbReference>
<dbReference type="CDD" id="cd15334">
    <property type="entry name" value="7tmA_5-HT1F"/>
    <property type="match status" value="1"/>
</dbReference>
<dbReference type="FunFam" id="1.20.1070.10:FF:000085">
    <property type="entry name" value="5-hydroxytryptamine receptor 1F"/>
    <property type="match status" value="1"/>
</dbReference>
<dbReference type="Gene3D" id="1.20.1070.10">
    <property type="entry name" value="Rhodopsin 7-helix transmembrane proteins"/>
    <property type="match status" value="1"/>
</dbReference>
<dbReference type="InterPro" id="IPR000450">
    <property type="entry name" value="5HT1F_rcpt"/>
</dbReference>
<dbReference type="InterPro" id="IPR002231">
    <property type="entry name" value="5HT_rcpt"/>
</dbReference>
<dbReference type="InterPro" id="IPR000276">
    <property type="entry name" value="GPCR_Rhodpsn"/>
</dbReference>
<dbReference type="InterPro" id="IPR017452">
    <property type="entry name" value="GPCR_Rhodpsn_7TM"/>
</dbReference>
<dbReference type="PANTHER" id="PTHR24248:SF196">
    <property type="entry name" value="5-HYDROXYTRYPTAMINE RECEPTOR 1D"/>
    <property type="match status" value="1"/>
</dbReference>
<dbReference type="PANTHER" id="PTHR24248">
    <property type="entry name" value="ADRENERGIC RECEPTOR-RELATED G-PROTEIN COUPLED RECEPTOR"/>
    <property type="match status" value="1"/>
</dbReference>
<dbReference type="Pfam" id="PF00001">
    <property type="entry name" value="7tm_1"/>
    <property type="match status" value="1"/>
</dbReference>
<dbReference type="PRINTS" id="PR00515">
    <property type="entry name" value="5HT1FRECEPTR"/>
</dbReference>
<dbReference type="PRINTS" id="PR01101">
    <property type="entry name" value="5HTRECEPTOR"/>
</dbReference>
<dbReference type="PRINTS" id="PR00237">
    <property type="entry name" value="GPCRRHODOPSN"/>
</dbReference>
<dbReference type="SMART" id="SM01381">
    <property type="entry name" value="7TM_GPCR_Srsx"/>
    <property type="match status" value="1"/>
</dbReference>
<dbReference type="SUPFAM" id="SSF81321">
    <property type="entry name" value="Family A G protein-coupled receptor-like"/>
    <property type="match status" value="1"/>
</dbReference>
<dbReference type="PROSITE" id="PS00237">
    <property type="entry name" value="G_PROTEIN_RECEP_F1_1"/>
    <property type="match status" value="1"/>
</dbReference>
<dbReference type="PROSITE" id="PS50262">
    <property type="entry name" value="G_PROTEIN_RECEP_F1_2"/>
    <property type="match status" value="1"/>
</dbReference>
<proteinExistence type="inferred from homology"/>
<gene>
    <name type="primary">Htr1f</name>
    <name type="synonym">5ht1f</name>
</gene>
<comment type="function">
    <text evidence="2 6">G-protein coupled receptor for 5-hydroxytryptamine (serotonin) (PubMed:8384716). Also functions as a receptor for various alkaloids and psychoactive substances (By similarity). Ligand binding causes a conformation change that triggers signaling via guanine nucleotide-binding proteins (G proteins) and modulates the activity of downstream effectors, such as adenylate cyclase (By similarity). HTR1F is coupled to G(i)/G(o) G alpha proteins and mediates inhibitory neurotransmission by inhibiting adenylate cyclase activity (By similarity).</text>
</comment>
<comment type="subcellular location">
    <subcellularLocation>
        <location evidence="6">Cell membrane</location>
        <topology evidence="2">Multi-pass membrane protein</topology>
    </subcellularLocation>
</comment>
<comment type="similarity">
    <text evidence="5">Belongs to the G-protein coupled receptor 1 family.</text>
</comment>
<organism>
    <name type="scientific">Rattus norvegicus</name>
    <name type="common">Rat</name>
    <dbReference type="NCBI Taxonomy" id="10116"/>
    <lineage>
        <taxon>Eukaryota</taxon>
        <taxon>Metazoa</taxon>
        <taxon>Chordata</taxon>
        <taxon>Craniata</taxon>
        <taxon>Vertebrata</taxon>
        <taxon>Euteleostomi</taxon>
        <taxon>Mammalia</taxon>
        <taxon>Eutheria</taxon>
        <taxon>Euarchontoglires</taxon>
        <taxon>Glires</taxon>
        <taxon>Rodentia</taxon>
        <taxon>Myomorpha</taxon>
        <taxon>Muroidea</taxon>
        <taxon>Muridae</taxon>
        <taxon>Murinae</taxon>
        <taxon>Rattus</taxon>
    </lineage>
</organism>
<accession>P30940</accession>
<reference key="1">
    <citation type="journal article" date="1993" name="Proc. Natl. Acad. Sci. U.S.A.">
        <title>Molecular cloning and functional expression of 5-HT1E-like rat and human 5-hydroxytryptamine receptor genes.</title>
        <authorList>
            <person name="Lovenberg T.W."/>
            <person name="Erlander M.G."/>
            <person name="Baron B.M."/>
            <person name="Racke M."/>
            <person name="Slone A.L."/>
            <person name="Siegel B.W."/>
            <person name="Craft C.M."/>
            <person name="Burns J.E."/>
            <person name="Danielson P.E."/>
            <person name="Sutcliffe G.J."/>
        </authorList>
    </citation>
    <scope>NUCLEOTIDE SEQUENCE [GENOMIC DNA]</scope>
    <scope>FUNCTION</scope>
    <scope>SUBCELLULAR LOCATION</scope>
</reference>
<evidence type="ECO:0000250" key="1">
    <source>
        <dbReference type="UniProtKB" id="P28221"/>
    </source>
</evidence>
<evidence type="ECO:0000250" key="2">
    <source>
        <dbReference type="UniProtKB" id="P30939"/>
    </source>
</evidence>
<evidence type="ECO:0000250" key="3">
    <source>
        <dbReference type="UniProtKB" id="P41595"/>
    </source>
</evidence>
<evidence type="ECO:0000255" key="4"/>
<evidence type="ECO:0000255" key="5">
    <source>
        <dbReference type="PROSITE-ProRule" id="PRU00521"/>
    </source>
</evidence>
<evidence type="ECO:0000269" key="6">
    <source>
    </source>
</evidence>